<sequence length="130" mass="14826">MAENQYYGTGRRKSSAARVFIKPGNGKIVINQRSLEQYFGRETARMVVRQPLELVDMVEKLDLYITVKGGGISGQAGAIRHGITRALMEYDESLRGELRKAGFVTRDARQVERKKVGLRKARRRPQFSKR</sequence>
<comment type="similarity">
    <text evidence="1">Belongs to the universal ribosomal protein uS9 family.</text>
</comment>
<gene>
    <name evidence="1" type="primary">rpsI</name>
    <name type="ordered locus">SeAg_B3535</name>
</gene>
<evidence type="ECO:0000255" key="1">
    <source>
        <dbReference type="HAMAP-Rule" id="MF_00532"/>
    </source>
</evidence>
<evidence type="ECO:0000305" key="2"/>
<proteinExistence type="inferred from homology"/>
<accession>B5F7K4</accession>
<dbReference type="EMBL" id="CP001138">
    <property type="protein sequence ID" value="ACH51138.1"/>
    <property type="molecule type" value="Genomic_DNA"/>
</dbReference>
<dbReference type="RefSeq" id="WP_000829815.1">
    <property type="nucleotide sequence ID" value="NC_011149.1"/>
</dbReference>
<dbReference type="SMR" id="B5F7K4"/>
<dbReference type="GeneID" id="97393262"/>
<dbReference type="KEGG" id="sea:SeAg_B3535"/>
<dbReference type="HOGENOM" id="CLU_046483_2_1_6"/>
<dbReference type="Proteomes" id="UP000008819">
    <property type="component" value="Chromosome"/>
</dbReference>
<dbReference type="GO" id="GO:0022627">
    <property type="term" value="C:cytosolic small ribosomal subunit"/>
    <property type="evidence" value="ECO:0007669"/>
    <property type="project" value="TreeGrafter"/>
</dbReference>
<dbReference type="GO" id="GO:0003723">
    <property type="term" value="F:RNA binding"/>
    <property type="evidence" value="ECO:0007669"/>
    <property type="project" value="TreeGrafter"/>
</dbReference>
<dbReference type="GO" id="GO:0003735">
    <property type="term" value="F:structural constituent of ribosome"/>
    <property type="evidence" value="ECO:0007669"/>
    <property type="project" value="InterPro"/>
</dbReference>
<dbReference type="GO" id="GO:0006412">
    <property type="term" value="P:translation"/>
    <property type="evidence" value="ECO:0007669"/>
    <property type="project" value="UniProtKB-UniRule"/>
</dbReference>
<dbReference type="FunFam" id="3.30.230.10:FF:000001">
    <property type="entry name" value="30S ribosomal protein S9"/>
    <property type="match status" value="1"/>
</dbReference>
<dbReference type="Gene3D" id="3.30.230.10">
    <property type="match status" value="1"/>
</dbReference>
<dbReference type="HAMAP" id="MF_00532_B">
    <property type="entry name" value="Ribosomal_uS9_B"/>
    <property type="match status" value="1"/>
</dbReference>
<dbReference type="InterPro" id="IPR020568">
    <property type="entry name" value="Ribosomal_Su5_D2-typ_SF"/>
</dbReference>
<dbReference type="InterPro" id="IPR000754">
    <property type="entry name" value="Ribosomal_uS9"/>
</dbReference>
<dbReference type="InterPro" id="IPR023035">
    <property type="entry name" value="Ribosomal_uS9_bac/plastid"/>
</dbReference>
<dbReference type="InterPro" id="IPR020574">
    <property type="entry name" value="Ribosomal_uS9_CS"/>
</dbReference>
<dbReference type="InterPro" id="IPR014721">
    <property type="entry name" value="Ribsml_uS5_D2-typ_fold_subgr"/>
</dbReference>
<dbReference type="NCBIfam" id="NF001099">
    <property type="entry name" value="PRK00132.1"/>
    <property type="match status" value="1"/>
</dbReference>
<dbReference type="PANTHER" id="PTHR21569">
    <property type="entry name" value="RIBOSOMAL PROTEIN S9"/>
    <property type="match status" value="1"/>
</dbReference>
<dbReference type="PANTHER" id="PTHR21569:SF1">
    <property type="entry name" value="SMALL RIBOSOMAL SUBUNIT PROTEIN US9M"/>
    <property type="match status" value="1"/>
</dbReference>
<dbReference type="Pfam" id="PF00380">
    <property type="entry name" value="Ribosomal_S9"/>
    <property type="match status" value="1"/>
</dbReference>
<dbReference type="SUPFAM" id="SSF54211">
    <property type="entry name" value="Ribosomal protein S5 domain 2-like"/>
    <property type="match status" value="1"/>
</dbReference>
<dbReference type="PROSITE" id="PS00360">
    <property type="entry name" value="RIBOSOMAL_S9"/>
    <property type="match status" value="1"/>
</dbReference>
<organism>
    <name type="scientific">Salmonella agona (strain SL483)</name>
    <dbReference type="NCBI Taxonomy" id="454166"/>
    <lineage>
        <taxon>Bacteria</taxon>
        <taxon>Pseudomonadati</taxon>
        <taxon>Pseudomonadota</taxon>
        <taxon>Gammaproteobacteria</taxon>
        <taxon>Enterobacterales</taxon>
        <taxon>Enterobacteriaceae</taxon>
        <taxon>Salmonella</taxon>
    </lineage>
</organism>
<reference key="1">
    <citation type="journal article" date="2011" name="J. Bacteriol.">
        <title>Comparative genomics of 28 Salmonella enterica isolates: evidence for CRISPR-mediated adaptive sublineage evolution.</title>
        <authorList>
            <person name="Fricke W.F."/>
            <person name="Mammel M.K."/>
            <person name="McDermott P.F."/>
            <person name="Tartera C."/>
            <person name="White D.G."/>
            <person name="Leclerc J.E."/>
            <person name="Ravel J."/>
            <person name="Cebula T.A."/>
        </authorList>
    </citation>
    <scope>NUCLEOTIDE SEQUENCE [LARGE SCALE GENOMIC DNA]</scope>
    <source>
        <strain>SL483</strain>
    </source>
</reference>
<name>RS9_SALA4</name>
<keyword id="KW-0687">Ribonucleoprotein</keyword>
<keyword id="KW-0689">Ribosomal protein</keyword>
<feature type="chain" id="PRO_1000128167" description="Small ribosomal subunit protein uS9">
    <location>
        <begin position="1"/>
        <end position="130"/>
    </location>
</feature>
<protein>
    <recommendedName>
        <fullName evidence="1">Small ribosomal subunit protein uS9</fullName>
    </recommendedName>
    <alternativeName>
        <fullName evidence="2">30S ribosomal protein S9</fullName>
    </alternativeName>
</protein>